<feature type="chain" id="PRO_1000006554" description="Deoxyguanosinetriphosphate triphosphohydrolase">
    <location>
        <begin position="1"/>
        <end position="505"/>
    </location>
</feature>
<feature type="domain" description="HD" evidence="2">
    <location>
        <begin position="66"/>
        <end position="273"/>
    </location>
</feature>
<protein>
    <recommendedName>
        <fullName evidence="1">Deoxyguanosinetriphosphate triphosphohydrolase</fullName>
        <shortName evidence="1">dGTP triphosphohydrolase</shortName>
        <shortName evidence="1">dGTPase</shortName>
        <ecNumber evidence="1">3.1.5.1</ecNumber>
    </recommendedName>
</protein>
<name>DGTP_YERE8</name>
<accession>A1JJQ7</accession>
<proteinExistence type="inferred from homology"/>
<gene>
    <name evidence="1" type="primary">dgt</name>
    <name type="ordered locus">YE0740</name>
</gene>
<dbReference type="EC" id="3.1.5.1" evidence="1"/>
<dbReference type="EMBL" id="AM286415">
    <property type="protein sequence ID" value="CAL10844.1"/>
    <property type="molecule type" value="Genomic_DNA"/>
</dbReference>
<dbReference type="RefSeq" id="WP_005164096.1">
    <property type="nucleotide sequence ID" value="NC_008800.1"/>
</dbReference>
<dbReference type="RefSeq" id="YP_001005084.1">
    <property type="nucleotide sequence ID" value="NC_008800.1"/>
</dbReference>
<dbReference type="SMR" id="A1JJQ7"/>
<dbReference type="GeneID" id="31411895"/>
<dbReference type="KEGG" id="yen:YE0740"/>
<dbReference type="PATRIC" id="fig|393305.7.peg.835"/>
<dbReference type="eggNOG" id="COG0232">
    <property type="taxonomic scope" value="Bacteria"/>
</dbReference>
<dbReference type="HOGENOM" id="CLU_028163_2_1_6"/>
<dbReference type="OrthoDB" id="9803619at2"/>
<dbReference type="Proteomes" id="UP000000642">
    <property type="component" value="Chromosome"/>
</dbReference>
<dbReference type="GO" id="GO:0008832">
    <property type="term" value="F:dGTPase activity"/>
    <property type="evidence" value="ECO:0007669"/>
    <property type="project" value="UniProtKB-UniRule"/>
</dbReference>
<dbReference type="GO" id="GO:0000287">
    <property type="term" value="F:magnesium ion binding"/>
    <property type="evidence" value="ECO:0007669"/>
    <property type="project" value="UniProtKB-UniRule"/>
</dbReference>
<dbReference type="GO" id="GO:0006203">
    <property type="term" value="P:dGTP catabolic process"/>
    <property type="evidence" value="ECO:0007669"/>
    <property type="project" value="InterPro"/>
</dbReference>
<dbReference type="CDD" id="cd00077">
    <property type="entry name" value="HDc"/>
    <property type="match status" value="1"/>
</dbReference>
<dbReference type="FunFam" id="1.10.3210.10:FF:000009">
    <property type="entry name" value="Deoxyguanosinetriphosphate triphosphohydrolase"/>
    <property type="match status" value="1"/>
</dbReference>
<dbReference type="FunFam" id="1.10.3210.10:FF:000010">
    <property type="entry name" value="Deoxyguanosinetriphosphate triphosphohydrolase"/>
    <property type="match status" value="1"/>
</dbReference>
<dbReference type="FunFam" id="1.10.3410.10:FF:000001">
    <property type="entry name" value="Deoxyguanosinetriphosphate triphosphohydrolase"/>
    <property type="match status" value="1"/>
</dbReference>
<dbReference type="Gene3D" id="1.10.3210.10">
    <property type="entry name" value="Hypothetical protein af1432"/>
    <property type="match status" value="2"/>
</dbReference>
<dbReference type="Gene3D" id="1.10.3410.10">
    <property type="entry name" value="putative deoxyguanosinetriphosphate triphosphohydrolase like domain"/>
    <property type="match status" value="1"/>
</dbReference>
<dbReference type="HAMAP" id="MF_00030">
    <property type="entry name" value="dGTPase_type1"/>
    <property type="match status" value="1"/>
</dbReference>
<dbReference type="InterPro" id="IPR023293">
    <property type="entry name" value="dGTP_triP_hydro_central_sf"/>
</dbReference>
<dbReference type="InterPro" id="IPR006261">
    <property type="entry name" value="dGTPase"/>
</dbReference>
<dbReference type="InterPro" id="IPR050135">
    <property type="entry name" value="dGTPase-like"/>
</dbReference>
<dbReference type="InterPro" id="IPR020779">
    <property type="entry name" value="dNTPase_1"/>
</dbReference>
<dbReference type="InterPro" id="IPR003607">
    <property type="entry name" value="HD/PDEase_dom"/>
</dbReference>
<dbReference type="InterPro" id="IPR006674">
    <property type="entry name" value="HD_domain"/>
</dbReference>
<dbReference type="InterPro" id="IPR026875">
    <property type="entry name" value="PHydrolase_assoc_dom"/>
</dbReference>
<dbReference type="NCBIfam" id="TIGR01353">
    <property type="entry name" value="dGTP_triPase"/>
    <property type="match status" value="1"/>
</dbReference>
<dbReference type="NCBIfam" id="NF003429">
    <property type="entry name" value="PRK04926.1"/>
    <property type="match status" value="1"/>
</dbReference>
<dbReference type="PANTHER" id="PTHR11373:SF32">
    <property type="entry name" value="DEOXYGUANOSINETRIPHOSPHATE TRIPHOSPHOHYDROLASE"/>
    <property type="match status" value="1"/>
</dbReference>
<dbReference type="PANTHER" id="PTHR11373">
    <property type="entry name" value="DEOXYNUCLEOSIDE TRIPHOSPHATE TRIPHOSPHOHYDROLASE"/>
    <property type="match status" value="1"/>
</dbReference>
<dbReference type="Pfam" id="PF01966">
    <property type="entry name" value="HD"/>
    <property type="match status" value="1"/>
</dbReference>
<dbReference type="Pfam" id="PF13286">
    <property type="entry name" value="HD_assoc"/>
    <property type="match status" value="1"/>
</dbReference>
<dbReference type="SMART" id="SM00471">
    <property type="entry name" value="HDc"/>
    <property type="match status" value="1"/>
</dbReference>
<dbReference type="SUPFAM" id="SSF109604">
    <property type="entry name" value="HD-domain/PDEase-like"/>
    <property type="match status" value="1"/>
</dbReference>
<dbReference type="PROSITE" id="PS51831">
    <property type="entry name" value="HD"/>
    <property type="match status" value="1"/>
</dbReference>
<keyword id="KW-0378">Hydrolase</keyword>
<keyword id="KW-0460">Magnesium</keyword>
<comment type="function">
    <text evidence="1">dGTPase preferentially hydrolyzes dGTP over the other canonical NTPs.</text>
</comment>
<comment type="catalytic activity">
    <reaction evidence="1">
        <text>dGTP + H2O = 2'-deoxyguanosine + triphosphate + H(+)</text>
        <dbReference type="Rhea" id="RHEA:15193"/>
        <dbReference type="ChEBI" id="CHEBI:15377"/>
        <dbReference type="ChEBI" id="CHEBI:15378"/>
        <dbReference type="ChEBI" id="CHEBI:17172"/>
        <dbReference type="ChEBI" id="CHEBI:18036"/>
        <dbReference type="ChEBI" id="CHEBI:61429"/>
        <dbReference type="EC" id="3.1.5.1"/>
    </reaction>
</comment>
<comment type="cofactor">
    <cofactor evidence="1">
        <name>Mg(2+)</name>
        <dbReference type="ChEBI" id="CHEBI:18420"/>
    </cofactor>
</comment>
<comment type="subunit">
    <text evidence="1">Homotetramer.</text>
</comment>
<comment type="similarity">
    <text evidence="1">Belongs to the dGTPase family. Type 1 subfamily.</text>
</comment>
<organism>
    <name type="scientific">Yersinia enterocolitica serotype O:8 / biotype 1B (strain NCTC 13174 / 8081)</name>
    <dbReference type="NCBI Taxonomy" id="393305"/>
    <lineage>
        <taxon>Bacteria</taxon>
        <taxon>Pseudomonadati</taxon>
        <taxon>Pseudomonadota</taxon>
        <taxon>Gammaproteobacteria</taxon>
        <taxon>Enterobacterales</taxon>
        <taxon>Yersiniaceae</taxon>
        <taxon>Yersinia</taxon>
    </lineage>
</organism>
<sequence>MSGIDFKQKISVQRPFGKPSSAEDEYEITRVFESDRGRIVNSAAIRRLQQKTQVFPLERNAAVRSRLTHSLEVQQVGRYIAKEILNRFKQDKKISAYGLDKLLDPFESIVEMACLMHDIGNPPFGHFGESAINNWFTKQMDPNGGGAEPRGKDQCLVNTLKLREGETELNILRSKIRQDLSHFEGNAQAIRLVYSLLKLNLTYAQVGCILKYTKPAYWSGDIPTSHNYLMKKPGFYLAEEEYVKDLRRELNMGEFNRFPLTYIMEAADDISYCIADLEDAVEKNIFSVEQLYDHMVQEWGETTHGDLFDKVVGGAFRQLGRGQGRRSSEDQFFMYLRVNTVGKLVPHAAQRFIENLPAVFSGSFNQALLEDSSPACKLLQIFKKVAVKHVFNYPEVEQLELQGYRVISGLLDIYSPLLAMPQTAFTQLVAEDSHREYPIETRLFHKLSTKHRLAYAESTERLRHLSPEQHEIYEYYYRARLIQDYISGMTDLYAYDEYRRLMAAE</sequence>
<reference key="1">
    <citation type="journal article" date="2006" name="PLoS Genet.">
        <title>The complete genome sequence and comparative genome analysis of the high pathogenicity Yersinia enterocolitica strain 8081.</title>
        <authorList>
            <person name="Thomson N.R."/>
            <person name="Howard S."/>
            <person name="Wren B.W."/>
            <person name="Holden M.T.G."/>
            <person name="Crossman L."/>
            <person name="Challis G.L."/>
            <person name="Churcher C."/>
            <person name="Mungall K."/>
            <person name="Brooks K."/>
            <person name="Chillingworth T."/>
            <person name="Feltwell T."/>
            <person name="Abdellah Z."/>
            <person name="Hauser H."/>
            <person name="Jagels K."/>
            <person name="Maddison M."/>
            <person name="Moule S."/>
            <person name="Sanders M."/>
            <person name="Whitehead S."/>
            <person name="Quail M.A."/>
            <person name="Dougan G."/>
            <person name="Parkhill J."/>
            <person name="Prentice M.B."/>
        </authorList>
    </citation>
    <scope>NUCLEOTIDE SEQUENCE [LARGE SCALE GENOMIC DNA]</scope>
    <source>
        <strain>NCTC 13174 / 8081</strain>
    </source>
</reference>
<evidence type="ECO:0000255" key="1">
    <source>
        <dbReference type="HAMAP-Rule" id="MF_00030"/>
    </source>
</evidence>
<evidence type="ECO:0000255" key="2">
    <source>
        <dbReference type="PROSITE-ProRule" id="PRU01175"/>
    </source>
</evidence>